<protein>
    <recommendedName>
        <fullName>NADH-ubiquinone oxidoreductase chain 4</fullName>
        <ecNumber>7.1.1.2</ecNumber>
    </recommendedName>
    <alternativeName>
        <fullName>NADH dehydrogenase subunit 4</fullName>
    </alternativeName>
</protein>
<keyword id="KW-0249">Electron transport</keyword>
<keyword id="KW-0472">Membrane</keyword>
<keyword id="KW-0496">Mitochondrion</keyword>
<keyword id="KW-0520">NAD</keyword>
<keyword id="KW-0679">Respiratory chain</keyword>
<keyword id="KW-1278">Translocase</keyword>
<keyword id="KW-0812">Transmembrane</keyword>
<keyword id="KW-1133">Transmembrane helix</keyword>
<keyword id="KW-0813">Transport</keyword>
<keyword id="KW-0830">Ubiquinone</keyword>
<gene>
    <name type="primary">MT-ND4</name>
    <name type="synonym">MTND4</name>
    <name type="synonym">NADH4</name>
    <name type="synonym">ND4</name>
</gene>
<reference key="1">
    <citation type="journal article" date="1996" name="Copeia">
        <title>Crotaline intergeneric relationships based on mitochondrial DNA sequence data.</title>
        <authorList>
            <person name="Kraus F."/>
            <person name="Mink D.G."/>
            <person name="Brown W.M."/>
        </authorList>
    </citation>
    <scope>NUCLEOTIDE SEQUENCE [GENOMIC DNA]</scope>
</reference>
<sequence>PIAGSMVLAAILLKLGGYGIIRMMQILPTTKTDMFLPFVVLALWGAILANLTCLQQTDLKSLIAYSSVSHMGLVVAAIIIQTPWGLAGAMTLMIAHGFTSSALFCLANTTYERTHTRILILTRGFHNILPMATTWWLLTNLMNIAIPPSMNFTSELLITSALFNWCPTTIILLGLSMLITASYSLHMFLSTQMGPTLLNNQTEPTHSREHLLMTLHITPLMMISMKPELIM</sequence>
<feature type="chain" id="PRO_0000117880" description="NADH-ubiquinone oxidoreductase chain 4">
    <location>
        <begin position="1" status="less than"/>
        <end position="231" status="greater than"/>
    </location>
</feature>
<feature type="transmembrane region" description="Helical" evidence="2">
    <location>
        <begin position="1"/>
        <end position="21"/>
    </location>
</feature>
<feature type="transmembrane region" description="Helical" evidence="2">
    <location>
        <begin position="34"/>
        <end position="54"/>
    </location>
</feature>
<feature type="transmembrane region" description="Helical" evidence="2">
    <location>
        <begin position="61"/>
        <end position="80"/>
    </location>
</feature>
<feature type="transmembrane region" description="Helical" evidence="2">
    <location>
        <begin position="85"/>
        <end position="107"/>
    </location>
</feature>
<feature type="transmembrane region" description="Helical" evidence="2">
    <location>
        <begin position="128"/>
        <end position="148"/>
    </location>
</feature>
<feature type="transmembrane region" description="Helical" evidence="2">
    <location>
        <begin position="169"/>
        <end position="189"/>
    </location>
</feature>
<feature type="non-terminal residue">
    <location>
        <position position="1"/>
    </location>
</feature>
<feature type="non-terminal residue">
    <location>
        <position position="231"/>
    </location>
</feature>
<proteinExistence type="inferred from homology"/>
<geneLocation type="mitochondrion"/>
<name>NU4M_GLOBL</name>
<organism>
    <name type="scientific">Gloydius blomhoffii</name>
    <name type="common">Mamushi</name>
    <name type="synonym">Agkistrodon halys blomhoffi</name>
    <dbReference type="NCBI Taxonomy" id="242054"/>
    <lineage>
        <taxon>Eukaryota</taxon>
        <taxon>Metazoa</taxon>
        <taxon>Chordata</taxon>
        <taxon>Craniata</taxon>
        <taxon>Vertebrata</taxon>
        <taxon>Euteleostomi</taxon>
        <taxon>Lepidosauria</taxon>
        <taxon>Squamata</taxon>
        <taxon>Bifurcata</taxon>
        <taxon>Unidentata</taxon>
        <taxon>Episquamata</taxon>
        <taxon>Toxicofera</taxon>
        <taxon>Serpentes</taxon>
        <taxon>Colubroidea</taxon>
        <taxon>Viperidae</taxon>
        <taxon>Crotalinae</taxon>
        <taxon>Gloydius</taxon>
    </lineage>
</organism>
<accession>O03726</accession>
<evidence type="ECO:0000250" key="1"/>
<evidence type="ECO:0000255" key="2"/>
<evidence type="ECO:0000305" key="3"/>
<dbReference type="EC" id="7.1.1.2"/>
<dbReference type="EMBL" id="U41867">
    <property type="protein sequence ID" value="AAB46642.1"/>
    <property type="molecule type" value="Genomic_DNA"/>
</dbReference>
<dbReference type="SMR" id="O03726"/>
<dbReference type="GO" id="GO:0031966">
    <property type="term" value="C:mitochondrial membrane"/>
    <property type="evidence" value="ECO:0007669"/>
    <property type="project" value="UniProtKB-SubCell"/>
</dbReference>
<dbReference type="GO" id="GO:0008137">
    <property type="term" value="F:NADH dehydrogenase (ubiquinone) activity"/>
    <property type="evidence" value="ECO:0007669"/>
    <property type="project" value="UniProtKB-EC"/>
</dbReference>
<dbReference type="GO" id="GO:0048039">
    <property type="term" value="F:ubiquinone binding"/>
    <property type="evidence" value="ECO:0007669"/>
    <property type="project" value="TreeGrafter"/>
</dbReference>
<dbReference type="GO" id="GO:0042773">
    <property type="term" value="P:ATP synthesis coupled electron transport"/>
    <property type="evidence" value="ECO:0007669"/>
    <property type="project" value="InterPro"/>
</dbReference>
<dbReference type="GO" id="GO:0015990">
    <property type="term" value="P:electron transport coupled proton transport"/>
    <property type="evidence" value="ECO:0007669"/>
    <property type="project" value="TreeGrafter"/>
</dbReference>
<dbReference type="InterPro" id="IPR003918">
    <property type="entry name" value="NADH_UbQ_OxRdtase"/>
</dbReference>
<dbReference type="InterPro" id="IPR001750">
    <property type="entry name" value="ND/Mrp_TM"/>
</dbReference>
<dbReference type="PANTHER" id="PTHR43507">
    <property type="entry name" value="NADH-UBIQUINONE OXIDOREDUCTASE CHAIN 4"/>
    <property type="match status" value="1"/>
</dbReference>
<dbReference type="PANTHER" id="PTHR43507:SF20">
    <property type="entry name" value="NADH-UBIQUINONE OXIDOREDUCTASE CHAIN 4"/>
    <property type="match status" value="1"/>
</dbReference>
<dbReference type="Pfam" id="PF00361">
    <property type="entry name" value="Proton_antipo_M"/>
    <property type="match status" value="1"/>
</dbReference>
<comment type="function">
    <text evidence="1">Core subunit of the mitochondrial membrane respiratory chain NADH dehydrogenase (Complex I) that is believed to belong to the minimal assembly required for catalysis. Complex I functions in the transfer of electrons from NADH to the respiratory chain. The immediate electron acceptor for the enzyme is believed to be ubiquinone (By similarity).</text>
</comment>
<comment type="catalytic activity">
    <reaction>
        <text>a ubiquinone + NADH + 5 H(+)(in) = a ubiquinol + NAD(+) + 4 H(+)(out)</text>
        <dbReference type="Rhea" id="RHEA:29091"/>
        <dbReference type="Rhea" id="RHEA-COMP:9565"/>
        <dbReference type="Rhea" id="RHEA-COMP:9566"/>
        <dbReference type="ChEBI" id="CHEBI:15378"/>
        <dbReference type="ChEBI" id="CHEBI:16389"/>
        <dbReference type="ChEBI" id="CHEBI:17976"/>
        <dbReference type="ChEBI" id="CHEBI:57540"/>
        <dbReference type="ChEBI" id="CHEBI:57945"/>
        <dbReference type="EC" id="7.1.1.2"/>
    </reaction>
</comment>
<comment type="subcellular location">
    <subcellularLocation>
        <location evidence="1">Mitochondrion membrane</location>
        <topology evidence="1">Multi-pass membrane protein</topology>
    </subcellularLocation>
</comment>
<comment type="similarity">
    <text evidence="3">Belongs to the complex I subunit 4 family.</text>
</comment>